<proteinExistence type="evidence at protein level"/>
<dbReference type="EC" id="1.8.3.7" evidence="3"/>
<dbReference type="EMBL" id="AL939132">
    <property type="protein sequence ID" value="CAC16428.1"/>
    <property type="molecule type" value="Genomic_DNA"/>
</dbReference>
<dbReference type="RefSeq" id="NP_631591.1">
    <property type="nucleotide sequence ID" value="NC_003888.3"/>
</dbReference>
<dbReference type="PDB" id="2Q17">
    <property type="method" value="X-ray"/>
    <property type="resolution" value="2.10 A"/>
    <property type="chains" value="A/B/C/D/E=3-314"/>
</dbReference>
<dbReference type="PDB" id="6MUJ">
    <property type="method" value="X-ray"/>
    <property type="resolution" value="2.25 A"/>
    <property type="chains" value="A/B/C/D/E=2-314"/>
</dbReference>
<dbReference type="PDBsum" id="2Q17"/>
<dbReference type="PDBsum" id="6MUJ"/>
<dbReference type="SMR" id="Q9F3C7"/>
<dbReference type="FunCoup" id="Q9F3C7">
    <property type="interactions" value="117"/>
</dbReference>
<dbReference type="STRING" id="100226.gene:17765208"/>
<dbReference type="PaxDb" id="100226-SCO7548"/>
<dbReference type="KEGG" id="sco:SCO7548"/>
<dbReference type="PATRIC" id="fig|100226.15.peg.7662"/>
<dbReference type="eggNOG" id="COG1262">
    <property type="taxonomic scope" value="Bacteria"/>
</dbReference>
<dbReference type="HOGENOM" id="CLU_012431_4_2_11"/>
<dbReference type="InParanoid" id="Q9F3C7"/>
<dbReference type="OrthoDB" id="9768004at2"/>
<dbReference type="PhylomeDB" id="Q9F3C7"/>
<dbReference type="BRENDA" id="1.8.3.7">
    <property type="organism ID" value="5998"/>
</dbReference>
<dbReference type="UniPathway" id="UPA00910"/>
<dbReference type="EvolutionaryTrace" id="Q9F3C7"/>
<dbReference type="Proteomes" id="UP000001973">
    <property type="component" value="Chromosome"/>
</dbReference>
<dbReference type="GO" id="GO:0005509">
    <property type="term" value="F:calcium ion binding"/>
    <property type="evidence" value="ECO:0000314"/>
    <property type="project" value="UniProtKB"/>
</dbReference>
<dbReference type="GO" id="GO:1903135">
    <property type="term" value="F:cupric ion binding"/>
    <property type="evidence" value="ECO:0000314"/>
    <property type="project" value="UniProtKB"/>
</dbReference>
<dbReference type="GO" id="GO:0120147">
    <property type="term" value="F:formylglycine-generating oxidase activity"/>
    <property type="evidence" value="ECO:0000314"/>
    <property type="project" value="UniProtKB"/>
</dbReference>
<dbReference type="GO" id="GO:0043687">
    <property type="term" value="P:post-translational protein modification"/>
    <property type="evidence" value="ECO:0000314"/>
    <property type="project" value="UniProtKB"/>
</dbReference>
<dbReference type="GO" id="GO:0018158">
    <property type="term" value="P:protein oxidation"/>
    <property type="evidence" value="ECO:0000314"/>
    <property type="project" value="UniProtKB"/>
</dbReference>
<dbReference type="FunFam" id="3.90.1580.10:FF:000007">
    <property type="entry name" value="Formylglycine-generating enzyme family protein"/>
    <property type="match status" value="1"/>
</dbReference>
<dbReference type="Gene3D" id="3.90.1580.10">
    <property type="entry name" value="paralog of FGE (formylglycine-generating enzyme)"/>
    <property type="match status" value="1"/>
</dbReference>
<dbReference type="InterPro" id="IPR016187">
    <property type="entry name" value="CTDL_fold"/>
</dbReference>
<dbReference type="InterPro" id="IPR051043">
    <property type="entry name" value="Sulfatase_Mod_Factor_Kinase"/>
</dbReference>
<dbReference type="InterPro" id="IPR005532">
    <property type="entry name" value="SUMF_dom"/>
</dbReference>
<dbReference type="InterPro" id="IPR042095">
    <property type="entry name" value="SUMF_sf"/>
</dbReference>
<dbReference type="PANTHER" id="PTHR23150:SF19">
    <property type="entry name" value="FORMYLGLYCINE-GENERATING ENZYME"/>
    <property type="match status" value="1"/>
</dbReference>
<dbReference type="PANTHER" id="PTHR23150">
    <property type="entry name" value="SULFATASE MODIFYING FACTOR 1, 2"/>
    <property type="match status" value="1"/>
</dbReference>
<dbReference type="Pfam" id="PF03781">
    <property type="entry name" value="FGE-sulfatase"/>
    <property type="match status" value="1"/>
</dbReference>
<dbReference type="SUPFAM" id="SSF56436">
    <property type="entry name" value="C-type lectin-like"/>
    <property type="match status" value="1"/>
</dbReference>
<comment type="function">
    <text evidence="2 3">Oxidase that catalyzes the conversion of cysteine to 3-oxoalanine on target proteins. 3-oxoalanine modification, which is also named formylglycine (fGly), occurs in the maturation of arylsulfatases and some alkaline phosphatases that use the hydrated form of 3-oxoalanine as a catalytic nucleophile.</text>
</comment>
<comment type="catalytic activity">
    <reaction evidence="3">
        <text>L-cysteinyl-[sulfatase] + 2 a thiol + O2 = an organic disulfide + 3-oxo-L-alanyl-[sulfatase] + hydrogen sulfide + H2O + H(+)</text>
        <dbReference type="Rhea" id="RHEA:51152"/>
        <dbReference type="Rhea" id="RHEA-COMP:12900"/>
        <dbReference type="Rhea" id="RHEA-COMP:12901"/>
        <dbReference type="ChEBI" id="CHEBI:15377"/>
        <dbReference type="ChEBI" id="CHEBI:15378"/>
        <dbReference type="ChEBI" id="CHEBI:15379"/>
        <dbReference type="ChEBI" id="CHEBI:29256"/>
        <dbReference type="ChEBI" id="CHEBI:29919"/>
        <dbReference type="ChEBI" id="CHEBI:29950"/>
        <dbReference type="ChEBI" id="CHEBI:35489"/>
        <dbReference type="ChEBI" id="CHEBI:85621"/>
        <dbReference type="EC" id="1.8.3.7"/>
    </reaction>
</comment>
<comment type="cofactor">
    <cofactor evidence="3">
        <name>Cu(2+)</name>
        <dbReference type="ChEBI" id="CHEBI:29036"/>
    </cofactor>
    <text evidence="3">The catalytic copper is required to activate oxygen and catalyze oxidative C-H activation.</text>
</comment>
<comment type="biophysicochemical properties">
    <kinetics>
        <KM evidence="3">96 uM for [sulfatase]-L-cysteine</KM>
        <text evidence="3">kcat is 17.3 min(-1) with [sulfatase]-L-cysteine as substrate.</text>
    </kinetics>
</comment>
<comment type="pathway">
    <text evidence="2 3">Protein modification; sulfatase oxidation.</text>
</comment>
<comment type="similarity">
    <text evidence="6">Belongs to the sulfatase-modifying factor family.</text>
</comment>
<comment type="caution">
    <text evidence="2 3">The disulfide bond observed in the structure does not exist in vivo (PubMed:18390551). The enzyme reaction was initially thought to act via a redox-active disulfide bond mechanism; however the disulfide bond only takes place with inactive enzyme that lacks the copper cofactor (PubMed:25931126). The catalytic copper is required to activate oxygen and catalyze oxidative C-H activation (PubMed:25931126).</text>
</comment>
<gene>
    <name evidence="8" type="ordered locus">SCO7548</name>
</gene>
<reference key="1">
    <citation type="journal article" date="2002" name="Nature">
        <title>Complete genome sequence of the model actinomycete Streptomyces coelicolor A3(2).</title>
        <authorList>
            <person name="Bentley S.D."/>
            <person name="Chater K.F."/>
            <person name="Cerdeno-Tarraga A.-M."/>
            <person name="Challis G.L."/>
            <person name="Thomson N.R."/>
            <person name="James K.D."/>
            <person name="Harris D.E."/>
            <person name="Quail M.A."/>
            <person name="Kieser H."/>
            <person name="Harper D."/>
            <person name="Bateman A."/>
            <person name="Brown S."/>
            <person name="Chandra G."/>
            <person name="Chen C.W."/>
            <person name="Collins M."/>
            <person name="Cronin A."/>
            <person name="Fraser A."/>
            <person name="Goble A."/>
            <person name="Hidalgo J."/>
            <person name="Hornsby T."/>
            <person name="Howarth S."/>
            <person name="Huang C.-H."/>
            <person name="Kieser T."/>
            <person name="Larke L."/>
            <person name="Murphy L.D."/>
            <person name="Oliver K."/>
            <person name="O'Neil S."/>
            <person name="Rabbinowitsch E."/>
            <person name="Rajandream M.A."/>
            <person name="Rutherford K.M."/>
            <person name="Rutter S."/>
            <person name="Seeger K."/>
            <person name="Saunders D."/>
            <person name="Sharp S."/>
            <person name="Squares R."/>
            <person name="Squares S."/>
            <person name="Taylor K."/>
            <person name="Warren T."/>
            <person name="Wietzorrek A."/>
            <person name="Woodward J.R."/>
            <person name="Barrell B.G."/>
            <person name="Parkhill J."/>
            <person name="Hopwood D.A."/>
        </authorList>
    </citation>
    <scope>NUCLEOTIDE SEQUENCE [LARGE SCALE GENOMIC DNA]</scope>
    <source>
        <strain>ATCC BAA-471 / A3(2) / M145</strain>
    </source>
</reference>
<reference key="2">
    <citation type="journal article" date="2015" name="J. Biol. Chem.">
        <title>Reconstitution of formylglycine-generating enzyme with copper(II) for aldehyde tag conversion.</title>
        <authorList>
            <person name="Holder P.G."/>
            <person name="Jones L.C."/>
            <person name="Drake P.M."/>
            <person name="Barfield R.M."/>
            <person name="Banas S."/>
            <person name="de Hart G.W."/>
            <person name="Baker J."/>
            <person name="Rabuka D."/>
        </authorList>
    </citation>
    <scope>FUNCTION</scope>
    <scope>CATALYTIC ACTIVITY</scope>
    <scope>PATHWAY</scope>
    <scope>BIOPHYSICOCHEMICAL PROPERTIES</scope>
    <scope>COFACTOR</scope>
</reference>
<reference evidence="9" key="3">
    <citation type="journal article" date="2008" name="J. Biol. Chem.">
        <title>Function and structure of a prokaryotic formylglycine-generating enzyme.</title>
        <authorList>
            <person name="Carlson B.L."/>
            <person name="Ballister E.R."/>
            <person name="Skordalakes E."/>
            <person name="King D.S."/>
            <person name="Breidenbach M.A."/>
            <person name="Gilmore S.A."/>
            <person name="Berger J.M."/>
            <person name="Bertozzi C.R."/>
        </authorList>
    </citation>
    <scope>X-RAY CRYSTALLOGRAPHY (2.10 ANGSTROMS) OF 3-314 IN COMPLEX WITH CALCIUM</scope>
    <scope>FUNCTION</scope>
    <scope>PATHWAY</scope>
    <scope>MUTAGENESIS OF TRP-234; CYS-272 AND CYS-277</scope>
</reference>
<accession>Q9F3C7</accession>
<keyword id="KW-0002">3D-structure</keyword>
<keyword id="KW-0106">Calcium</keyword>
<keyword id="KW-0186">Copper</keyword>
<keyword id="KW-0479">Metal-binding</keyword>
<keyword id="KW-0560">Oxidoreductase</keyword>
<keyword id="KW-1185">Reference proteome</keyword>
<evidence type="ECO:0000256" key="1">
    <source>
        <dbReference type="SAM" id="MobiDB-lite"/>
    </source>
</evidence>
<evidence type="ECO:0000269" key="2">
    <source>
    </source>
</evidence>
<evidence type="ECO:0000269" key="3">
    <source>
    </source>
</evidence>
<evidence type="ECO:0000303" key="4">
    <source>
    </source>
</evidence>
<evidence type="ECO:0000303" key="5">
    <source>
    </source>
</evidence>
<evidence type="ECO:0000305" key="6"/>
<evidence type="ECO:0000305" key="7">
    <source>
    </source>
</evidence>
<evidence type="ECO:0000312" key="8">
    <source>
        <dbReference type="EMBL" id="CAC16428.1"/>
    </source>
</evidence>
<evidence type="ECO:0007744" key="9">
    <source>
        <dbReference type="PDB" id="2Q17"/>
    </source>
</evidence>
<evidence type="ECO:0007829" key="10">
    <source>
        <dbReference type="PDB" id="2Q17"/>
    </source>
</evidence>
<protein>
    <recommendedName>
        <fullName evidence="4 5">Formylglycine-generating enzyme</fullName>
        <shortName evidence="4">FGE</shortName>
        <shortName evidence="5">sc-FGE</shortName>
        <ecNumber evidence="3">1.8.3.7</ecNumber>
    </recommendedName>
</protein>
<organism>
    <name type="scientific">Streptomyces coelicolor (strain ATCC BAA-471 / A3(2) / M145)</name>
    <dbReference type="NCBI Taxonomy" id="100226"/>
    <lineage>
        <taxon>Bacteria</taxon>
        <taxon>Bacillati</taxon>
        <taxon>Actinomycetota</taxon>
        <taxon>Actinomycetes</taxon>
        <taxon>Kitasatosporales</taxon>
        <taxon>Streptomycetaceae</taxon>
        <taxon>Streptomyces</taxon>
        <taxon>Streptomyces albidoflavus group</taxon>
    </lineage>
</organism>
<feature type="chain" id="PRO_0000444617" description="Formylglycine-generating enzyme">
    <location>
        <begin position="1"/>
        <end position="314"/>
    </location>
</feature>
<feature type="region of interest" description="Disordered" evidence="1">
    <location>
        <begin position="1"/>
        <end position="31"/>
    </location>
</feature>
<feature type="compositionally biased region" description="Low complexity" evidence="1">
    <location>
        <begin position="1"/>
        <end position="20"/>
    </location>
</feature>
<feature type="binding site" evidence="2 9">
    <location>
        <position position="194"/>
    </location>
    <ligand>
        <name>Ca(2+)</name>
        <dbReference type="ChEBI" id="CHEBI:29108"/>
    </ligand>
</feature>
<feature type="binding site" evidence="2 9">
    <location>
        <position position="195"/>
    </location>
    <ligand>
        <name>Ca(2+)</name>
        <dbReference type="ChEBI" id="CHEBI:29108"/>
    </ligand>
</feature>
<feature type="binding site" evidence="2 9">
    <location>
        <position position="208"/>
    </location>
    <ligand>
        <name>Ca(2+)</name>
        <dbReference type="ChEBI" id="CHEBI:29108"/>
    </ligand>
</feature>
<feature type="binding site" evidence="2 9">
    <location>
        <position position="210"/>
    </location>
    <ligand>
        <name>Ca(2+)</name>
        <dbReference type="ChEBI" id="CHEBI:29108"/>
    </ligand>
</feature>
<feature type="binding site" evidence="7">
    <location>
        <position position="272"/>
    </location>
    <ligand>
        <name>Cu(2+)</name>
        <dbReference type="ChEBI" id="CHEBI:29036"/>
        <note>catalytic</note>
    </ligand>
</feature>
<feature type="binding site" evidence="7">
    <location>
        <position position="277"/>
    </location>
    <ligand>
        <name>Cu(2+)</name>
        <dbReference type="ChEBI" id="CHEBI:29036"/>
        <note>catalytic</note>
    </ligand>
</feature>
<feature type="mutagenesis site" description="Does not abolish formylglycine-generating enzyme activity." evidence="2">
    <original>W</original>
    <variation>A</variation>
    <variation>F</variation>
    <location>
        <position position="234"/>
    </location>
</feature>
<feature type="mutagenesis site" description="Abolished formylglycine-generating enzyme activity." evidence="2">
    <original>C</original>
    <variation>S</variation>
    <location>
        <position position="272"/>
    </location>
</feature>
<feature type="mutagenesis site" description="Abolished formylglycine-generating enzyme activity." evidence="2">
    <original>C</original>
    <variation>S</variation>
    <location>
        <position position="277"/>
    </location>
</feature>
<feature type="strand" evidence="10">
    <location>
        <begin position="26"/>
        <end position="29"/>
    </location>
</feature>
<feature type="strand" evidence="10">
    <location>
        <begin position="32"/>
        <end position="37"/>
    </location>
</feature>
<feature type="helix" evidence="10">
    <location>
        <begin position="45"/>
        <end position="47"/>
    </location>
</feature>
<feature type="strand" evidence="10">
    <location>
        <begin position="53"/>
        <end position="57"/>
    </location>
</feature>
<feature type="strand" evidence="10">
    <location>
        <begin position="60"/>
        <end position="65"/>
    </location>
</feature>
<feature type="helix" evidence="10">
    <location>
        <begin position="69"/>
        <end position="79"/>
    </location>
</feature>
<feature type="helix" evidence="10">
    <location>
        <begin position="84"/>
        <end position="88"/>
    </location>
</feature>
<feature type="strand" evidence="10">
    <location>
        <begin position="89"/>
        <end position="94"/>
    </location>
</feature>
<feature type="helix" evidence="10">
    <location>
        <begin position="95"/>
        <end position="97"/>
    </location>
</feature>
<feature type="helix" evidence="10">
    <location>
        <begin position="102"/>
        <end position="104"/>
    </location>
</feature>
<feature type="strand" evidence="10">
    <location>
        <begin position="105"/>
        <end position="108"/>
    </location>
</feature>
<feature type="strand" evidence="10">
    <location>
        <begin position="115"/>
        <end position="119"/>
    </location>
</feature>
<feature type="helix" evidence="10">
    <location>
        <begin position="146"/>
        <end position="156"/>
    </location>
</feature>
<feature type="helix" evidence="10">
    <location>
        <begin position="163"/>
        <end position="171"/>
    </location>
</feature>
<feature type="helix" evidence="10">
    <location>
        <begin position="187"/>
        <end position="189"/>
    </location>
</feature>
<feature type="turn" evidence="10">
    <location>
        <begin position="200"/>
        <end position="202"/>
    </location>
</feature>
<feature type="strand" evidence="10">
    <location>
        <begin position="229"/>
        <end position="240"/>
    </location>
</feature>
<feature type="helix" evidence="10">
    <location>
        <begin position="245"/>
        <end position="248"/>
    </location>
</feature>
<feature type="strand" evidence="10">
    <location>
        <begin position="251"/>
        <end position="253"/>
    </location>
</feature>
<feature type="strand" evidence="10">
    <location>
        <begin position="261"/>
        <end position="267"/>
    </location>
</feature>
<feature type="turn" evidence="10">
    <location>
        <begin position="274"/>
        <end position="276"/>
    </location>
</feature>
<feature type="strand" evidence="10">
    <location>
        <begin position="286"/>
        <end position="288"/>
    </location>
</feature>
<feature type="strand" evidence="10">
    <location>
        <begin position="302"/>
        <end position="304"/>
    </location>
</feature>
<name>FGE_STRCO</name>
<sequence length="314" mass="33736">MAVAAPSPAAAAEPGPAARPRSTRGQVRLPGGEFAMGDAFGEGYPADGETPVHTVRLRPFHIDETAVTNARFAAFVKATGHVTDAERFGSSAVFHLVVAAPDADVLGSAAGAPWWINVRGAHWRRPEGARSDITGRPNHPVVHVSWNDATAYARWAGKRLPTEAEWEYAARGGLAGRRYAWGDELTPGGRWRCNIWQGRFPHVNTAEDGHLSTAPVKSYRPNGHGLWNTAGNVWEWCSDWFSPTYYAESPTVDPHGPGTGAARVLRGGSYLCHDSYCNRYRVAARSSNTPDSSSGNLGFRCANDADLTSGSAAE</sequence>